<evidence type="ECO:0000255" key="1">
    <source>
        <dbReference type="HAMAP-Rule" id="MF_00044"/>
    </source>
</evidence>
<dbReference type="EC" id="6.1.1.23" evidence="1"/>
<dbReference type="EMBL" id="AE016853">
    <property type="protein sequence ID" value="AAO57440.1"/>
    <property type="molecule type" value="Genomic_DNA"/>
</dbReference>
<dbReference type="RefSeq" id="NP_793745.1">
    <property type="nucleotide sequence ID" value="NC_004578.1"/>
</dbReference>
<dbReference type="RefSeq" id="WP_011104814.1">
    <property type="nucleotide sequence ID" value="NC_004578.1"/>
</dbReference>
<dbReference type="SMR" id="Q87Y31"/>
<dbReference type="STRING" id="223283.PSPTO_3981"/>
<dbReference type="GeneID" id="1185657"/>
<dbReference type="KEGG" id="pst:PSPTO_3981"/>
<dbReference type="PATRIC" id="fig|223283.9.peg.4081"/>
<dbReference type="eggNOG" id="COG0173">
    <property type="taxonomic scope" value="Bacteria"/>
</dbReference>
<dbReference type="HOGENOM" id="CLU_014330_3_2_6"/>
<dbReference type="OrthoDB" id="9802326at2"/>
<dbReference type="PhylomeDB" id="Q87Y31"/>
<dbReference type="Proteomes" id="UP000002515">
    <property type="component" value="Chromosome"/>
</dbReference>
<dbReference type="GO" id="GO:0005737">
    <property type="term" value="C:cytoplasm"/>
    <property type="evidence" value="ECO:0007669"/>
    <property type="project" value="UniProtKB-SubCell"/>
</dbReference>
<dbReference type="GO" id="GO:0004815">
    <property type="term" value="F:aspartate-tRNA ligase activity"/>
    <property type="evidence" value="ECO:0007669"/>
    <property type="project" value="UniProtKB-UniRule"/>
</dbReference>
<dbReference type="GO" id="GO:0050560">
    <property type="term" value="F:aspartate-tRNA(Asn) ligase activity"/>
    <property type="evidence" value="ECO:0007669"/>
    <property type="project" value="UniProtKB-EC"/>
</dbReference>
<dbReference type="GO" id="GO:0005524">
    <property type="term" value="F:ATP binding"/>
    <property type="evidence" value="ECO:0007669"/>
    <property type="project" value="UniProtKB-UniRule"/>
</dbReference>
<dbReference type="GO" id="GO:0003676">
    <property type="term" value="F:nucleic acid binding"/>
    <property type="evidence" value="ECO:0007669"/>
    <property type="project" value="InterPro"/>
</dbReference>
<dbReference type="GO" id="GO:0006422">
    <property type="term" value="P:aspartyl-tRNA aminoacylation"/>
    <property type="evidence" value="ECO:0007669"/>
    <property type="project" value="UniProtKB-UniRule"/>
</dbReference>
<dbReference type="CDD" id="cd00777">
    <property type="entry name" value="AspRS_core"/>
    <property type="match status" value="1"/>
</dbReference>
<dbReference type="CDD" id="cd04317">
    <property type="entry name" value="EcAspRS_like_N"/>
    <property type="match status" value="1"/>
</dbReference>
<dbReference type="Gene3D" id="3.30.930.10">
    <property type="entry name" value="Bira Bifunctional Protein, Domain 2"/>
    <property type="match status" value="1"/>
</dbReference>
<dbReference type="Gene3D" id="3.30.1360.30">
    <property type="entry name" value="GAD-like domain"/>
    <property type="match status" value="1"/>
</dbReference>
<dbReference type="Gene3D" id="2.40.50.140">
    <property type="entry name" value="Nucleic acid-binding proteins"/>
    <property type="match status" value="1"/>
</dbReference>
<dbReference type="HAMAP" id="MF_00044">
    <property type="entry name" value="Asp_tRNA_synth_type1"/>
    <property type="match status" value="1"/>
</dbReference>
<dbReference type="InterPro" id="IPR004364">
    <property type="entry name" value="Aa-tRNA-synt_II"/>
</dbReference>
<dbReference type="InterPro" id="IPR006195">
    <property type="entry name" value="aa-tRNA-synth_II"/>
</dbReference>
<dbReference type="InterPro" id="IPR045864">
    <property type="entry name" value="aa-tRNA-synth_II/BPL/LPL"/>
</dbReference>
<dbReference type="InterPro" id="IPR004524">
    <property type="entry name" value="Asp-tRNA-ligase_1"/>
</dbReference>
<dbReference type="InterPro" id="IPR047089">
    <property type="entry name" value="Asp-tRNA-ligase_1_N"/>
</dbReference>
<dbReference type="InterPro" id="IPR002312">
    <property type="entry name" value="Asp/Asn-tRNA-synth_IIb"/>
</dbReference>
<dbReference type="InterPro" id="IPR047090">
    <property type="entry name" value="AspRS_core"/>
</dbReference>
<dbReference type="InterPro" id="IPR004115">
    <property type="entry name" value="GAD-like_sf"/>
</dbReference>
<dbReference type="InterPro" id="IPR029351">
    <property type="entry name" value="GAD_dom"/>
</dbReference>
<dbReference type="InterPro" id="IPR012340">
    <property type="entry name" value="NA-bd_OB-fold"/>
</dbReference>
<dbReference type="InterPro" id="IPR004365">
    <property type="entry name" value="NA-bd_OB_tRNA"/>
</dbReference>
<dbReference type="NCBIfam" id="TIGR00459">
    <property type="entry name" value="aspS_bact"/>
    <property type="match status" value="1"/>
</dbReference>
<dbReference type="NCBIfam" id="NF001750">
    <property type="entry name" value="PRK00476.1"/>
    <property type="match status" value="1"/>
</dbReference>
<dbReference type="PANTHER" id="PTHR22594:SF5">
    <property type="entry name" value="ASPARTATE--TRNA LIGASE, MITOCHONDRIAL"/>
    <property type="match status" value="1"/>
</dbReference>
<dbReference type="PANTHER" id="PTHR22594">
    <property type="entry name" value="ASPARTYL/LYSYL-TRNA SYNTHETASE"/>
    <property type="match status" value="1"/>
</dbReference>
<dbReference type="Pfam" id="PF02938">
    <property type="entry name" value="GAD"/>
    <property type="match status" value="1"/>
</dbReference>
<dbReference type="Pfam" id="PF00152">
    <property type="entry name" value="tRNA-synt_2"/>
    <property type="match status" value="1"/>
</dbReference>
<dbReference type="Pfam" id="PF01336">
    <property type="entry name" value="tRNA_anti-codon"/>
    <property type="match status" value="1"/>
</dbReference>
<dbReference type="PRINTS" id="PR01042">
    <property type="entry name" value="TRNASYNTHASP"/>
</dbReference>
<dbReference type="SUPFAM" id="SSF55681">
    <property type="entry name" value="Class II aaRS and biotin synthetases"/>
    <property type="match status" value="1"/>
</dbReference>
<dbReference type="SUPFAM" id="SSF55261">
    <property type="entry name" value="GAD domain-like"/>
    <property type="match status" value="1"/>
</dbReference>
<dbReference type="SUPFAM" id="SSF50249">
    <property type="entry name" value="Nucleic acid-binding proteins"/>
    <property type="match status" value="1"/>
</dbReference>
<dbReference type="PROSITE" id="PS50862">
    <property type="entry name" value="AA_TRNA_LIGASE_II"/>
    <property type="match status" value="1"/>
</dbReference>
<reference key="1">
    <citation type="journal article" date="2003" name="Proc. Natl. Acad. Sci. U.S.A.">
        <title>The complete genome sequence of the Arabidopsis and tomato pathogen Pseudomonas syringae pv. tomato DC3000.</title>
        <authorList>
            <person name="Buell C.R."/>
            <person name="Joardar V."/>
            <person name="Lindeberg M."/>
            <person name="Selengut J."/>
            <person name="Paulsen I.T."/>
            <person name="Gwinn M.L."/>
            <person name="Dodson R.J."/>
            <person name="DeBoy R.T."/>
            <person name="Durkin A.S."/>
            <person name="Kolonay J.F."/>
            <person name="Madupu R."/>
            <person name="Daugherty S.C."/>
            <person name="Brinkac L.M."/>
            <person name="Beanan M.J."/>
            <person name="Haft D.H."/>
            <person name="Nelson W.C."/>
            <person name="Davidsen T.M."/>
            <person name="Zafar N."/>
            <person name="Zhou L."/>
            <person name="Liu J."/>
            <person name="Yuan Q."/>
            <person name="Khouri H.M."/>
            <person name="Fedorova N.B."/>
            <person name="Tran B."/>
            <person name="Russell D."/>
            <person name="Berry K.J."/>
            <person name="Utterback T.R."/>
            <person name="Van Aken S.E."/>
            <person name="Feldblyum T.V."/>
            <person name="D'Ascenzo M."/>
            <person name="Deng W.-L."/>
            <person name="Ramos A.R."/>
            <person name="Alfano J.R."/>
            <person name="Cartinhour S."/>
            <person name="Chatterjee A.K."/>
            <person name="Delaney T.P."/>
            <person name="Lazarowitz S.G."/>
            <person name="Martin G.B."/>
            <person name="Schneider D.J."/>
            <person name="Tang X."/>
            <person name="Bender C.L."/>
            <person name="White O."/>
            <person name="Fraser C.M."/>
            <person name="Collmer A."/>
        </authorList>
    </citation>
    <scope>NUCLEOTIDE SEQUENCE [LARGE SCALE GENOMIC DNA]</scope>
    <source>
        <strain>ATCC BAA-871 / DC3000</strain>
    </source>
</reference>
<comment type="function">
    <text evidence="1">Aspartyl-tRNA synthetase with relaxed tRNA specificity since it is able to aspartylate not only its cognate tRNA(Asp) but also tRNA(Asn). Reaction proceeds in two steps: L-aspartate is first activated by ATP to form Asp-AMP and then transferred to the acceptor end of tRNA(Asp/Asn).</text>
</comment>
<comment type="catalytic activity">
    <reaction evidence="1">
        <text>tRNA(Asx) + L-aspartate + ATP = L-aspartyl-tRNA(Asx) + AMP + diphosphate</text>
        <dbReference type="Rhea" id="RHEA:18349"/>
        <dbReference type="Rhea" id="RHEA-COMP:9710"/>
        <dbReference type="Rhea" id="RHEA-COMP:9711"/>
        <dbReference type="ChEBI" id="CHEBI:29991"/>
        <dbReference type="ChEBI" id="CHEBI:30616"/>
        <dbReference type="ChEBI" id="CHEBI:33019"/>
        <dbReference type="ChEBI" id="CHEBI:78442"/>
        <dbReference type="ChEBI" id="CHEBI:78516"/>
        <dbReference type="ChEBI" id="CHEBI:456215"/>
        <dbReference type="EC" id="6.1.1.23"/>
    </reaction>
</comment>
<comment type="subunit">
    <text evidence="1">Homodimer.</text>
</comment>
<comment type="subcellular location">
    <subcellularLocation>
        <location evidence="1">Cytoplasm</location>
    </subcellularLocation>
</comment>
<comment type="similarity">
    <text evidence="1">Belongs to the class-II aminoacyl-tRNA synthetase family. Type 1 subfamily.</text>
</comment>
<accession>Q87Y31</accession>
<gene>
    <name evidence="1" type="primary">aspS</name>
    <name type="ordered locus">PSPTO_3981</name>
</gene>
<sequence length="591" mass="66352">MMRSHYCGQLNESLEGQEITLCGWVHRRRDHGGVIFLDIRDREGMAQVVFDPDRADSFAAADRVRSEYVVKVVGKVRARPAGAVNANMASGAIEVLGYELEVLNESETPPFPLNEYSDVGEETRLRYRFIDLRRPEMAEKLRLRSRITTSIRRYLDENGFLDVETPILTRATPEGARDYLVPSRTHPGSFFALPQSPQLFKQLLMVAGFDRYYQIAKCFRDEDLRADRQPEFTQIDIETSFLNEEDIIGLTEKMVRQLFKEVLNVEFGDFPHMTFEEAMRRYGSDKPDLRNPLELVDVADQLNAVEFKVFSGPANDPKGRVAALRVPGAASMARSQIDDYTKFVSIYGAKGLAYIKVNERAKGPEGLQSPIVKFIPEENLNVILDRVGAVDGDIVFFGADKFKVVSEALGALRIKIGNDLKLHTCEWAPMWVVDFPMFEENDDGSFSALHHPFTAPKCTPEELEANPATALSRAYDMVLNGTELGGGSIRIHRKEMQQAVFRLLGIAEDEQQEKFGFLLDALKYGAPPHGGLAFGLDRLVMLMTGAQSIREVIAFPKTQSAADVMTQAPGVVDAKALRELHIRLREQPKAE</sequence>
<name>SYDND_PSESM</name>
<keyword id="KW-0030">Aminoacyl-tRNA synthetase</keyword>
<keyword id="KW-0067">ATP-binding</keyword>
<keyword id="KW-0963">Cytoplasm</keyword>
<keyword id="KW-0436">Ligase</keyword>
<keyword id="KW-0547">Nucleotide-binding</keyword>
<keyword id="KW-0648">Protein biosynthesis</keyword>
<keyword id="KW-1185">Reference proteome</keyword>
<feature type="chain" id="PRO_0000110926" description="Aspartate--tRNA(Asp/Asn) ligase">
    <location>
        <begin position="1"/>
        <end position="591"/>
    </location>
</feature>
<feature type="region of interest" description="Aspartate" evidence="1">
    <location>
        <begin position="198"/>
        <end position="201"/>
    </location>
</feature>
<feature type="binding site" evidence="1">
    <location>
        <position position="174"/>
    </location>
    <ligand>
        <name>L-aspartate</name>
        <dbReference type="ChEBI" id="CHEBI:29991"/>
    </ligand>
</feature>
<feature type="binding site" evidence="1">
    <location>
        <begin position="220"/>
        <end position="222"/>
    </location>
    <ligand>
        <name>ATP</name>
        <dbReference type="ChEBI" id="CHEBI:30616"/>
    </ligand>
</feature>
<feature type="binding site" evidence="1">
    <location>
        <position position="220"/>
    </location>
    <ligand>
        <name>L-aspartate</name>
        <dbReference type="ChEBI" id="CHEBI:29991"/>
    </ligand>
</feature>
<feature type="binding site" evidence="1">
    <location>
        <position position="229"/>
    </location>
    <ligand>
        <name>ATP</name>
        <dbReference type="ChEBI" id="CHEBI:30616"/>
    </ligand>
</feature>
<feature type="binding site" evidence="1">
    <location>
        <position position="450"/>
    </location>
    <ligand>
        <name>L-aspartate</name>
        <dbReference type="ChEBI" id="CHEBI:29991"/>
    </ligand>
</feature>
<feature type="binding site" evidence="1">
    <location>
        <position position="483"/>
    </location>
    <ligand>
        <name>ATP</name>
        <dbReference type="ChEBI" id="CHEBI:30616"/>
    </ligand>
</feature>
<feature type="binding site" evidence="1">
    <location>
        <position position="490"/>
    </location>
    <ligand>
        <name>L-aspartate</name>
        <dbReference type="ChEBI" id="CHEBI:29991"/>
    </ligand>
</feature>
<feature type="binding site" evidence="1">
    <location>
        <begin position="535"/>
        <end position="538"/>
    </location>
    <ligand>
        <name>ATP</name>
        <dbReference type="ChEBI" id="CHEBI:30616"/>
    </ligand>
</feature>
<feature type="site" description="Important for tRNA non-discrimination" evidence="1">
    <location>
        <position position="31"/>
    </location>
</feature>
<feature type="site" description="Important for tRNA non-discrimination" evidence="1">
    <location>
        <position position="82"/>
    </location>
</feature>
<proteinExistence type="inferred from homology"/>
<organism>
    <name type="scientific">Pseudomonas syringae pv. tomato (strain ATCC BAA-871 / DC3000)</name>
    <dbReference type="NCBI Taxonomy" id="223283"/>
    <lineage>
        <taxon>Bacteria</taxon>
        <taxon>Pseudomonadati</taxon>
        <taxon>Pseudomonadota</taxon>
        <taxon>Gammaproteobacteria</taxon>
        <taxon>Pseudomonadales</taxon>
        <taxon>Pseudomonadaceae</taxon>
        <taxon>Pseudomonas</taxon>
    </lineage>
</organism>
<protein>
    <recommendedName>
        <fullName evidence="1">Aspartate--tRNA(Asp/Asn) ligase</fullName>
        <ecNumber evidence="1">6.1.1.23</ecNumber>
    </recommendedName>
    <alternativeName>
        <fullName evidence="1">Aspartyl-tRNA synthetase</fullName>
        <shortName evidence="1">AspRS</shortName>
    </alternativeName>
    <alternativeName>
        <fullName evidence="1">Non-discriminating aspartyl-tRNA synthetase</fullName>
        <shortName evidence="1">ND-AspRS</shortName>
    </alternativeName>
</protein>